<gene>
    <name type="primary">3</name>
</gene>
<sequence length="424" mass="47267">MEEPKYTIDLRTNNGWWARLKSWFVGGRLVTPNQGSQTGPVSAHGYLGDSSINDERILQISTVWRCVSLISTLTACLPLDVFETDQNDNRKKVDLSNPLARLLRYSPNQYMTAQEFREAMTMQLCFYGNAYALVDRNSAGDVISLLPLQSANMDVKLVGKKVVYRYQRDSEYADFSQKEIFHLKGFGFTGLVGLSPIAFACKSAGVAVAMEDQQRDFFANGAKSPQILSTGEKVLTEQQRSQVEENFKEIAGGPVKKRLWILEAGFSTSAIGVTPQDAEMMASRKFQVSELARFFGVPPHLVGDVEKSTSWGSGIEQQNLGFLQYTLQPYISRWENSIQRWLIPSKDVGRLHAEHNLDGLLRGDSASRAAFMKAMGESGLRTINEMRRTDNMPPLPGGDVAMRQAQYVPITDLGTNKEPRNNGA</sequence>
<dbReference type="EMBL" id="U18319">
    <property type="protein sequence ID" value="AAA80202.1"/>
    <property type="molecule type" value="Genomic_DNA"/>
</dbReference>
<dbReference type="PIR" id="S54390">
    <property type="entry name" value="S54390"/>
</dbReference>
<dbReference type="RefSeq" id="NP_037699.1">
    <property type="nucleotide sequence ID" value="NC_002167.1"/>
</dbReference>
<dbReference type="PDB" id="8CEZ">
    <property type="method" value="EM"/>
    <property type="resolution" value="2.97 A"/>
    <property type="chains" value="A/B/C/D/E/F/G/H/I/J/K/L=1-424"/>
</dbReference>
<dbReference type="PDB" id="8FQL">
    <property type="method" value="EM"/>
    <property type="resolution" value="3.60 A"/>
    <property type="chains" value="A/B/C/D/E/F/G/H/I/J/K/L=1-424"/>
</dbReference>
<dbReference type="PDBsum" id="8CEZ"/>
<dbReference type="PDBsum" id="8FQL"/>
<dbReference type="EMDB" id="EMD-29392"/>
<dbReference type="SMR" id="P49859"/>
<dbReference type="GeneID" id="1262529"/>
<dbReference type="KEGG" id="vg:1262529"/>
<dbReference type="GO" id="GO:0019028">
    <property type="term" value="C:viral capsid"/>
    <property type="evidence" value="ECO:0007669"/>
    <property type="project" value="UniProtKB-KW"/>
</dbReference>
<dbReference type="GO" id="GO:0099001">
    <property type="term" value="P:symbiont genome ejection through host cell envelope, long flexible tail mechanism"/>
    <property type="evidence" value="ECO:0007669"/>
    <property type="project" value="UniProtKB-KW"/>
</dbReference>
<dbReference type="Gene3D" id="1.20.1270.210">
    <property type="match status" value="1"/>
</dbReference>
<dbReference type="Gene3D" id="3.30.1120.70">
    <property type="match status" value="1"/>
</dbReference>
<dbReference type="Gene3D" id="3.40.140.120">
    <property type="match status" value="1"/>
</dbReference>
<dbReference type="InterPro" id="IPR006944">
    <property type="entry name" value="Phage/GTA_portal"/>
</dbReference>
<dbReference type="InterPro" id="IPR006427">
    <property type="entry name" value="Portal_HK97"/>
</dbReference>
<dbReference type="NCBIfam" id="TIGR01537">
    <property type="entry name" value="portal_HK97"/>
    <property type="match status" value="1"/>
</dbReference>
<dbReference type="Pfam" id="PF04860">
    <property type="entry name" value="Phage_portal"/>
    <property type="match status" value="1"/>
</dbReference>
<organismHost>
    <name type="scientific">Escherichia coli</name>
    <dbReference type="NCBI Taxonomy" id="562"/>
</organismHost>
<comment type="function">
    <text evidence="1 2">Forms the portal vertex of the capsid (PubMed:37293963, PubMed:37327331). This portal plays critical roles in head assembly, genome packaging, neck/tail attachment, and genome ejection. The portal protein multimerizes as a single ring-shaped homododecamer arranged around a central channel (PubMed:37293963, PubMed:37327331). Binds to the terminase subunits to form the packaging machine (PubMed:37293963).</text>
</comment>
<comment type="subunit">
    <text evidence="1 2">Homododecamer; forms a ring-like structure through which genomic DNA is translocated into the capsid (PubMed:37293963, PubMed:37327331). Asymmetry of the portal protein is induced upon binding of the large terminase and DNA (PubMed:37293963). Interacts with the terminase large subunit; this interaction allows the packaging of viral DNA (PubMed:37293963). Interacts with the capsid protein (PubMed:37327331).</text>
</comment>
<comment type="subcellular location">
    <subcellularLocation>
        <location evidence="1 2">Virion</location>
    </subcellularLocation>
</comment>
<comment type="similarity">
    <text evidence="3">Belongs to the phage portal family. HK97 subfamily.</text>
</comment>
<feature type="chain" id="PRO_0000065885" description="Portal protein">
    <location>
        <begin position="1"/>
        <end position="424"/>
    </location>
</feature>
<feature type="strand" evidence="6">
    <location>
        <begin position="34"/>
        <end position="36"/>
    </location>
</feature>
<feature type="strand" evidence="6">
    <location>
        <begin position="48"/>
        <end position="50"/>
    </location>
</feature>
<feature type="helix" evidence="6">
    <location>
        <begin position="54"/>
        <end position="58"/>
    </location>
</feature>
<feature type="helix" evidence="6">
    <location>
        <begin position="61"/>
        <end position="75"/>
    </location>
</feature>
<feature type="strand" evidence="6">
    <location>
        <begin position="79"/>
        <end position="82"/>
    </location>
</feature>
<feature type="helix" evidence="6">
    <location>
        <begin position="98"/>
        <end position="104"/>
    </location>
</feature>
<feature type="strand" evidence="6">
    <location>
        <begin position="107"/>
        <end position="111"/>
    </location>
</feature>
<feature type="helix" evidence="6">
    <location>
        <begin position="113"/>
        <end position="126"/>
    </location>
</feature>
<feature type="strand" evidence="6">
    <location>
        <begin position="127"/>
        <end position="136"/>
    </location>
</feature>
<feature type="strand" evidence="6">
    <location>
        <begin position="142"/>
        <end position="147"/>
    </location>
</feature>
<feature type="strand" evidence="6">
    <location>
        <begin position="152"/>
        <end position="157"/>
    </location>
</feature>
<feature type="strand" evidence="6">
    <location>
        <begin position="159"/>
        <end position="167"/>
    </location>
</feature>
<feature type="strand" evidence="6">
    <location>
        <begin position="169"/>
        <end position="175"/>
    </location>
</feature>
<feature type="strand" evidence="6">
    <location>
        <begin position="180"/>
        <end position="184"/>
    </location>
</feature>
<feature type="strand" evidence="6">
    <location>
        <begin position="188"/>
        <end position="192"/>
    </location>
</feature>
<feature type="helix" evidence="6">
    <location>
        <begin position="196"/>
        <end position="199"/>
    </location>
</feature>
<feature type="helix" evidence="6">
    <location>
        <begin position="201"/>
        <end position="219"/>
    </location>
</feature>
<feature type="strand" evidence="6">
    <location>
        <begin position="236"/>
        <end position="239"/>
    </location>
</feature>
<feature type="helix" evidence="6">
    <location>
        <begin position="243"/>
        <end position="247"/>
    </location>
</feature>
<feature type="helix" evidence="6">
    <location>
        <begin position="248"/>
        <end position="250"/>
    </location>
</feature>
<feature type="turn" evidence="6">
    <location>
        <begin position="275"/>
        <end position="279"/>
    </location>
</feature>
<feature type="helix" evidence="6">
    <location>
        <begin position="280"/>
        <end position="293"/>
    </location>
</feature>
<feature type="helix" evidence="6">
    <location>
        <begin position="299"/>
        <end position="302"/>
    </location>
</feature>
<feature type="strand" evidence="6">
    <location>
        <begin position="305"/>
        <end position="307"/>
    </location>
</feature>
<feature type="strand" evidence="6">
    <location>
        <begin position="315"/>
        <end position="317"/>
    </location>
</feature>
<feature type="helix" evidence="6">
    <location>
        <begin position="318"/>
        <end position="325"/>
    </location>
</feature>
<feature type="helix" evidence="6">
    <location>
        <begin position="328"/>
        <end position="341"/>
    </location>
</feature>
<feature type="strand" evidence="6">
    <location>
        <begin position="348"/>
        <end position="350"/>
    </location>
</feature>
<feature type="strand" evidence="6">
    <location>
        <begin position="352"/>
        <end position="355"/>
    </location>
</feature>
<feature type="turn" evidence="6">
    <location>
        <begin position="358"/>
        <end position="361"/>
    </location>
</feature>
<feature type="helix" evidence="6">
    <location>
        <begin position="367"/>
        <end position="377"/>
    </location>
</feature>
<feature type="helix" evidence="6">
    <location>
        <begin position="383"/>
        <end position="389"/>
    </location>
</feature>
<reference key="1">
    <citation type="journal article" date="1995" name="J. Mol. Biol.">
        <title>Genetic basis of bacteriophage HK97 prohead assembly.</title>
        <authorList>
            <person name="Duda R.L."/>
            <person name="Martincic K."/>
            <person name="Hendrix R.W."/>
        </authorList>
    </citation>
    <scope>NUCLEOTIDE SEQUENCE [GENOMIC DNA]</scope>
</reference>
<reference evidence="4" key="2">
    <citation type="journal article" date="2023" name="Nucleic Acids Res.">
        <title>Insights into a viral motor: the structure of the HK97 packaging termination assembly.</title>
        <authorList>
            <person name="Hawkins D.E.D.P."/>
            <person name="Bayfield O.W."/>
            <person name="Fung H.K.H."/>
            <person name="Grba D.N."/>
            <person name="Huet A."/>
            <person name="Conway J.F."/>
            <person name="Antson A.A."/>
        </authorList>
    </citation>
    <scope>STRUCTURE BY ELECTRON MICROSCOPY (2.97 ANGSTROMS)</scope>
    <scope>SUBUNIT</scope>
    <scope>INTERACTION WITH THE TERMINASE LARGE SUBUNIT</scope>
    <scope>SUBCELLULAR LOCATION</scope>
</reference>
<reference evidence="5" key="3">
    <citation type="journal article" date="2023" name="Sci. Adv.">
        <title>A symmetry mismatch unraveled: How phage HK97 scaffold flexibly accommodates a 12-fold pore at a 5-fold viral capsid vertex.</title>
        <authorList>
            <person name="Huet A."/>
            <person name="Oh B."/>
            <person name="Maurer J."/>
            <person name="Duda R.L."/>
            <person name="Conway J.F."/>
        </authorList>
    </citation>
    <scope>STRUCTURE BY ELECTRON MICROSCOPY (3.60 ANGSTROMS)</scope>
    <scope>SUBUNIT</scope>
    <scope>FUNCTION</scope>
    <scope>INTERACTION WITH THE CAPSID PROTEIN</scope>
    <scope>SUBCELLULAR LOCATION</scope>
</reference>
<keyword id="KW-0002">3D-structure</keyword>
<keyword id="KW-0167">Capsid protein</keyword>
<keyword id="KW-0118">Viral capsid assembly</keyword>
<keyword id="KW-1171">Viral genome ejection through host cell envelope</keyword>
<keyword id="KW-0231">Viral genome packaging</keyword>
<keyword id="KW-1243">Viral long flexible tail ejection system</keyword>
<keyword id="KW-1162">Viral penetration into host cytoplasm</keyword>
<keyword id="KW-1188">Viral release from host cell</keyword>
<keyword id="KW-0946">Virion</keyword>
<keyword id="KW-1160">Virus entry into host cell</keyword>
<proteinExistence type="evidence at protein level"/>
<evidence type="ECO:0000269" key="1">
    <source>
    </source>
</evidence>
<evidence type="ECO:0000269" key="2">
    <source>
    </source>
</evidence>
<evidence type="ECO:0000305" key="3"/>
<evidence type="ECO:0007744" key="4">
    <source>
        <dbReference type="PDB" id="8CEZ"/>
    </source>
</evidence>
<evidence type="ECO:0007744" key="5">
    <source>
        <dbReference type="PDB" id="8FQL"/>
    </source>
</evidence>
<evidence type="ECO:0007829" key="6">
    <source>
        <dbReference type="PDB" id="8CEZ"/>
    </source>
</evidence>
<accession>P49859</accession>
<organism>
    <name type="scientific">Enterobacteria phage HK97</name>
    <name type="common">Bacteriophage HK97</name>
    <dbReference type="NCBI Taxonomy" id="2681617"/>
    <lineage>
        <taxon>Viruses</taxon>
        <taxon>Duplodnaviria</taxon>
        <taxon>Heunggongvirae</taxon>
        <taxon>Uroviricota</taxon>
        <taxon>Caudoviricetes</taxon>
        <taxon>Hendrixvirinae</taxon>
        <taxon>Byrnievirus</taxon>
        <taxon>Byrnievirus HK97</taxon>
    </lineage>
</organism>
<name>PORTL_BPHK7</name>
<protein>
    <recommendedName>
        <fullName>Portal protein</fullName>
    </recommendedName>
    <alternativeName>
        <fullName>GP3</fullName>
    </alternativeName>
</protein>